<feature type="signal peptide" evidence="2">
    <location>
        <begin position="1"/>
        <end position="42"/>
    </location>
</feature>
<feature type="propeptide" id="PRO_0000026833" evidence="2">
    <location>
        <begin position="43"/>
        <end position="99"/>
    </location>
</feature>
<feature type="chain" id="PRO_0000026834" description="Immunoglobulin A1 protease">
    <location>
        <begin position="100"/>
        <end position="2004"/>
    </location>
</feature>
<feature type="transmembrane region" description="Helical" evidence="2">
    <location>
        <begin position="106"/>
        <end position="125"/>
    </location>
</feature>
<feature type="transmembrane region" description="Helical" evidence="2">
    <location>
        <begin position="132"/>
        <end position="154"/>
    </location>
</feature>
<feature type="topological domain" description="Extracellular" evidence="2">
    <location>
        <begin position="155"/>
        <end position="2004"/>
    </location>
</feature>
<feature type="domain" description="G5" evidence="3">
    <location>
        <begin position="314"/>
        <end position="393"/>
    </location>
</feature>
<feature type="repeat" description="1">
    <location>
        <begin position="419"/>
        <end position="435"/>
    </location>
</feature>
<feature type="repeat" description="2">
    <location>
        <begin position="436"/>
        <end position="452"/>
    </location>
</feature>
<feature type="repeat" description="3">
    <location>
        <begin position="453"/>
        <end position="469"/>
    </location>
</feature>
<feature type="region of interest" description="Disordered" evidence="6">
    <location>
        <begin position="194"/>
        <end position="213"/>
    </location>
</feature>
<feature type="region of interest" description="Disordered" evidence="6">
    <location>
        <begin position="235"/>
        <end position="305"/>
    </location>
</feature>
<feature type="region of interest" description="Disordered" evidence="6">
    <location>
        <begin position="373"/>
        <end position="394"/>
    </location>
</feature>
<feature type="region of interest" description="3 X 17 AA approximate tandem repeats">
    <location>
        <begin position="419"/>
        <end position="469"/>
    </location>
</feature>
<feature type="region of interest" description="Disordered" evidence="6">
    <location>
        <begin position="422"/>
        <end position="720"/>
    </location>
</feature>
<feature type="short sequence motif" description="LPXTG sorting signal" evidence="4">
    <location>
        <begin position="96"/>
        <end position="100"/>
    </location>
</feature>
<feature type="compositionally biased region" description="Polar residues" evidence="6">
    <location>
        <begin position="197"/>
        <end position="213"/>
    </location>
</feature>
<feature type="compositionally biased region" description="Polar residues" evidence="6">
    <location>
        <begin position="235"/>
        <end position="246"/>
    </location>
</feature>
<feature type="compositionally biased region" description="Basic and acidic residues" evidence="6">
    <location>
        <begin position="276"/>
        <end position="296"/>
    </location>
</feature>
<feature type="compositionally biased region" description="Basic and acidic residues" evidence="6">
    <location>
        <begin position="485"/>
        <end position="511"/>
    </location>
</feature>
<feature type="compositionally biased region" description="Polar residues" evidence="6">
    <location>
        <begin position="516"/>
        <end position="529"/>
    </location>
</feature>
<feature type="compositionally biased region" description="Polar residues" evidence="6">
    <location>
        <begin position="538"/>
        <end position="572"/>
    </location>
</feature>
<feature type="compositionally biased region" description="Basic and acidic residues" evidence="6">
    <location>
        <begin position="574"/>
        <end position="591"/>
    </location>
</feature>
<feature type="compositionally biased region" description="Polar residues" evidence="6">
    <location>
        <begin position="618"/>
        <end position="639"/>
    </location>
</feature>
<feature type="compositionally biased region" description="Polar residues" evidence="6">
    <location>
        <begin position="648"/>
        <end position="681"/>
    </location>
</feature>
<feature type="compositionally biased region" description="Low complexity" evidence="6">
    <location>
        <begin position="682"/>
        <end position="699"/>
    </location>
</feature>
<feature type="compositionally biased region" description="Basic and acidic residues" evidence="6">
    <location>
        <begin position="700"/>
        <end position="720"/>
    </location>
</feature>
<feature type="active site" evidence="5">
    <location>
        <position position="1646"/>
    </location>
</feature>
<feature type="binding site" evidence="1">
    <location>
        <position position="1645"/>
    </location>
    <ligand>
        <name>Zn(2+)</name>
        <dbReference type="ChEBI" id="CHEBI:29105"/>
    </ligand>
</feature>
<feature type="binding site" evidence="1">
    <location>
        <position position="1649"/>
    </location>
    <ligand>
        <name>Zn(2+)</name>
        <dbReference type="ChEBI" id="CHEBI:29105"/>
    </ligand>
</feature>
<feature type="binding site" evidence="1">
    <location>
        <position position="1669"/>
    </location>
    <ligand>
        <name>Zn(2+)</name>
        <dbReference type="ChEBI" id="CHEBI:29105"/>
    </ligand>
</feature>
<feature type="modified residue" description="Pentaglycyl murein peptidoglycan amidated threonine" evidence="4">
    <location>
        <position position="99"/>
    </location>
</feature>
<sequence length="2004" mass="223909">MEKYFGEKQERFSFRKLSVGLVSATISSLFFMSVLASSSVDAQETAGVHYKYVADSELSSEEKKQLVYDIPTYVENDDETYYLVYKLNSQNQLAELPNTGSKNERQALVAGASLAAMGILIFAVSKKKVKNKTVLHLVLVAGIGNGVLVSVHALENHLLLNYNTDYELTSGEKLPLPKEISGYTYIGYIKEGKTTSESEVSNQKSSVATPTKQQKVDYNVTPNFVDHPSTVQAIQEQTPVSSTKPTEVQVVEKPFSTELINPRKEEKQSSDSQEQLAEHKNLETKKEEKISPKEKTGVNTLNPQDEVLSGQLNKPELLYREETMETKIDFQEEIQENPDLAEGTVRVKQEGKLGKKVEIVRIFSVNKEEVSREIVSTSTTAPSPRIVEKGTKKTQVIKEQPETGVEHKDVQSGAIVEPAIQPELPEAVVSDKGEPEVQPTLPEAVVTDKGETEVQPESPDTVVSDKGEPEQVAPLPEYKGNIEQVKPETPVEKTKEQGPEKTEEVPVKPTEETPVNPNEGTTEGTSIQEAENPVQPAEESTTNSEKVSPDTSSKNTGEVSSNPSDSTTSVGESNKPEHNDSKNENSEKTVEEVPVNPNEGTVEGTSNQETEKPVQPAEETQTNSGKIANENTGEVSNKPSDSKPPVEESNQPEKNGTATKPENSGNTTSENGQTEPEPSNGNSTEDVSTESNTSNSNGNEEIKQENELDPDKKVEEPEKTLELRNVSDLELYSLSNGTYKQHISLEQVPSNPNSYFVKVKSSSFKDVYLPVASISEERKNDKILYKITAKVEKLQQEIESRYKDNFTFYLAKKGTEETTNFTSFSNLVKAINQNPSGTYHLAASLNANEVELGPDERSYIKDTFTGRLIGEKDGKNYAIYNLKKPLFENLSGATVEKLSLKNVAISGKDDIGSLANEAQNNTKIKQVHVDGVLAGERGIGGLLAKAEQSSITESSFKGRIINTYETTAAYNIGGMVGHLTGDKALLTKSKATVAISSNTNTSDQTVGGLAGLVDRDAQIQDSYAEGDINNVKHFGRVAGVAGNLWDRTSGDVRHAGSLTNVLSDVNVTNGNAITGYHYNEMKVKDTFSSKANRVYNVTLVKDEVVSKESFEERGTMLDASQIASKKAEINPLILPTVEPLSTSGKKDSDFSKVAYYQAKRNLTYKNIEKLLPFYNKATIVKYGNLVNENSLLYQKELLSAVMMKDNQVITDIVSNKQTANKLLLHYKDDLSEKLDLKYQNDFAKLAEYSLGNTGLLYTPNQFLYDQTSIIKQVLPDLQKVDYHSEAIRKTLGISPNVKQTELYLEDQFAKTKQQLEDSLKKLLSADAGLASANPVTEGYLVDKIKRNKEALLLGLTYLERWYNFSYGQVNVKDLVLYHLDFFGKGNASPLDTLIELGKSGFNNLLAKNNVDTYGISLASQHGTTDLFSTLEHYRKVFLPNTSNNDWFKSETKAYIVEEKSTIEEVKTKQGLAGTKYSIGVYDRITSATWKYRNMVLPLLTLPERSVFVISTMSSLGFGAYDRYRSSDHKAGKALNDFVEENARETAKRQRDHYDYWYRILDDNAREKLYRNILLYDAYKFGDDNTVGKATEVADFDNPNPAMQHFFGPVGNKVGHNQHGAYATGDAVYYMGYRMLDKDGAITYTHEMTHDSDQDIYLGGYGRRSGLGPEFFAKGLLQAPDHPDDATITINSILKHSKSDSTESRRLQVLDPTTRFNNADDLKQYVHNMFDVVYMLEYLEGNSILKLDTNQKQQLLRKVTNEYHPDPDGNKVYATNVVRNLTVEEVERLRSFNDLIDNNILSSREYASGKYERNGYFTIKLFAPIYAALSNDIGTPGDLMGRRIAYELLAAKGFKDGMVPYISNQYEEEAKQKGKTINLYGKTRGLVTDDLVLEKVFNNQYHTWSEFKKAMYQERQDQFDRLNKVTFNDTTQPWQTFAKKTTSSVDELQKLMDVAVRKDAEHNYYHWNNYNPDIDSEVHKLKRAIFKAYLDQTNDFRSSIFENKK</sequence>
<comment type="function">
    <text evidence="7">Zinc metalloproteinase which cleaves human immunoglobulin A1 (IgA1) in the hinge region, rendering it less efficient in coating the surface of colonizing or invading pneumococci. Strongly contributes to virulence in mice. May be responsible for pneumococcal infection and is potentially involved in distinct stages of pneumococcal disease.</text>
</comment>
<comment type="catalytic activity">
    <reaction>
        <text>Cleavage of Pro-|-Thr bond in the hinge region of the heavy chain of human IgA.</text>
        <dbReference type="EC" id="3.4.24.13"/>
    </reaction>
</comment>
<comment type="cofactor">
    <cofactor evidence="1">
        <name>Zn(2+)</name>
        <dbReference type="ChEBI" id="CHEBI:29105"/>
    </cofactor>
    <text evidence="1">Binds 1 zinc ion per subunit.</text>
</comment>
<comment type="subcellular location">
    <subcellularLocation>
        <location evidence="4">Secreted</location>
        <location evidence="4">Cell wall</location>
    </subcellularLocation>
    <subcellularLocation>
        <location evidence="1">Membrane</location>
        <topology evidence="1">Multi-pass membrane protein</topology>
    </subcellularLocation>
    <subcellularLocation>
        <location evidence="4">Secreted</location>
        <location evidence="4">Cell wall</location>
        <topology evidence="4">Peptidoglycan-anchor</topology>
    </subcellularLocation>
</comment>
<comment type="PTM">
    <text evidence="1">The Gram-positive cell-wall anchor motif LPXTG is located in the N-terminal part, in contrast to such motifs in other known streptococcal and staphylococcal proteins. The protease could be cleaved by the sortase and anchored in the membrane via the two potential N-terminal transmembrane domains, whereas the propeptide located prior to the LPXTG motif would remain attached to the cell wall peptidoglycan by an amide bond (By similarity).</text>
</comment>
<comment type="similarity">
    <text evidence="8">Belongs to the peptidase M26 family.</text>
</comment>
<name>IGA1A_STRPN</name>
<accession>Q97QP7</accession>
<evidence type="ECO:0000250" key="1"/>
<evidence type="ECO:0000255" key="2"/>
<evidence type="ECO:0000255" key="3">
    <source>
        <dbReference type="PROSITE-ProRule" id="PRU00437"/>
    </source>
</evidence>
<evidence type="ECO:0000255" key="4">
    <source>
        <dbReference type="PROSITE-ProRule" id="PRU00477"/>
    </source>
</evidence>
<evidence type="ECO:0000255" key="5">
    <source>
        <dbReference type="PROSITE-ProRule" id="PRU10095"/>
    </source>
</evidence>
<evidence type="ECO:0000256" key="6">
    <source>
        <dbReference type="SAM" id="MobiDB-lite"/>
    </source>
</evidence>
<evidence type="ECO:0000269" key="7">
    <source>
    </source>
</evidence>
<evidence type="ECO:0000305" key="8"/>
<dbReference type="EC" id="3.4.24.13"/>
<dbReference type="EMBL" id="AE005672">
    <property type="protein sequence ID" value="AAK75263.1"/>
    <property type="molecule type" value="Genomic_DNA"/>
</dbReference>
<dbReference type="PIR" id="F95133">
    <property type="entry name" value="F95133"/>
</dbReference>
<dbReference type="RefSeq" id="WP_000417180.1">
    <property type="nucleotide sequence ID" value="NC_003028.3"/>
</dbReference>
<dbReference type="SMR" id="Q97QP7"/>
<dbReference type="MEROPS" id="M26.001"/>
<dbReference type="PaxDb" id="170187-SP_1154"/>
<dbReference type="EnsemblBacteria" id="AAK75263">
    <property type="protein sequence ID" value="AAK75263"/>
    <property type="gene ID" value="SP_1154"/>
</dbReference>
<dbReference type="KEGG" id="spn:SP_1154"/>
<dbReference type="eggNOG" id="COG0810">
    <property type="taxonomic scope" value="Bacteria"/>
</dbReference>
<dbReference type="eggNOG" id="COG3583">
    <property type="taxonomic scope" value="Bacteria"/>
</dbReference>
<dbReference type="PhylomeDB" id="Q97QP7"/>
<dbReference type="BioCyc" id="SPNE170187:G1FZB-1174-MONOMER"/>
<dbReference type="BRENDA" id="3.4.24.13">
    <property type="organism ID" value="1960"/>
</dbReference>
<dbReference type="Proteomes" id="UP000000585">
    <property type="component" value="Chromosome"/>
</dbReference>
<dbReference type="GO" id="GO:0005576">
    <property type="term" value="C:extracellular region"/>
    <property type="evidence" value="ECO:0007669"/>
    <property type="project" value="UniProtKB-KW"/>
</dbReference>
<dbReference type="GO" id="GO:0016020">
    <property type="term" value="C:membrane"/>
    <property type="evidence" value="ECO:0007669"/>
    <property type="project" value="UniProtKB-SubCell"/>
</dbReference>
<dbReference type="GO" id="GO:0004222">
    <property type="term" value="F:metalloendopeptidase activity"/>
    <property type="evidence" value="ECO:0007669"/>
    <property type="project" value="InterPro"/>
</dbReference>
<dbReference type="GO" id="GO:0008270">
    <property type="term" value="F:zinc ion binding"/>
    <property type="evidence" value="ECO:0007669"/>
    <property type="project" value="InterPro"/>
</dbReference>
<dbReference type="GO" id="GO:0006508">
    <property type="term" value="P:proteolysis"/>
    <property type="evidence" value="ECO:0007669"/>
    <property type="project" value="UniProtKB-KW"/>
</dbReference>
<dbReference type="Gene3D" id="2.160.20.110">
    <property type="match status" value="1"/>
</dbReference>
<dbReference type="Gene3D" id="2.20.230.10">
    <property type="entry name" value="Resuscitation-promoting factor rpfb"/>
    <property type="match status" value="1"/>
</dbReference>
<dbReference type="InterPro" id="IPR011098">
    <property type="entry name" value="G5_dom"/>
</dbReference>
<dbReference type="InterPro" id="IPR019931">
    <property type="entry name" value="LPXTG_anchor"/>
</dbReference>
<dbReference type="InterPro" id="IPR011505">
    <property type="entry name" value="Peptidase_M26_C_dom"/>
</dbReference>
<dbReference type="InterPro" id="IPR008006">
    <property type="entry name" value="Peptidase_M26_N_dom"/>
</dbReference>
<dbReference type="InterPro" id="IPR005877">
    <property type="entry name" value="YSIRK_signal_dom"/>
</dbReference>
<dbReference type="NCBIfam" id="TIGR01167">
    <property type="entry name" value="LPXTG_anchor"/>
    <property type="match status" value="1"/>
</dbReference>
<dbReference type="NCBIfam" id="TIGR01168">
    <property type="entry name" value="YSIRK_signal"/>
    <property type="match status" value="1"/>
</dbReference>
<dbReference type="NCBIfam" id="NF046017">
    <property type="entry name" value="ZmpA"/>
    <property type="match status" value="1"/>
</dbReference>
<dbReference type="Pfam" id="PF07501">
    <property type="entry name" value="G5"/>
    <property type="match status" value="1"/>
</dbReference>
<dbReference type="Pfam" id="PF00746">
    <property type="entry name" value="Gram_pos_anchor"/>
    <property type="match status" value="1"/>
</dbReference>
<dbReference type="Pfam" id="PF07580">
    <property type="entry name" value="Peptidase_M26_C"/>
    <property type="match status" value="1"/>
</dbReference>
<dbReference type="Pfam" id="PF05342">
    <property type="entry name" value="Peptidase_M26_N"/>
    <property type="match status" value="1"/>
</dbReference>
<dbReference type="Pfam" id="PF04650">
    <property type="entry name" value="YSIRK_signal"/>
    <property type="match status" value="1"/>
</dbReference>
<dbReference type="SMART" id="SM01208">
    <property type="entry name" value="G5"/>
    <property type="match status" value="1"/>
</dbReference>
<dbReference type="PROSITE" id="PS51109">
    <property type="entry name" value="G5"/>
    <property type="match status" value="1"/>
</dbReference>
<dbReference type="PROSITE" id="PS50847">
    <property type="entry name" value="GRAM_POS_ANCHORING"/>
    <property type="match status" value="1"/>
</dbReference>
<dbReference type="PROSITE" id="PS00142">
    <property type="entry name" value="ZINC_PROTEASE"/>
    <property type="match status" value="1"/>
</dbReference>
<proteinExistence type="inferred from homology"/>
<keyword id="KW-0134">Cell wall</keyword>
<keyword id="KW-0378">Hydrolase</keyword>
<keyword id="KW-0472">Membrane</keyword>
<keyword id="KW-0479">Metal-binding</keyword>
<keyword id="KW-0482">Metalloprotease</keyword>
<keyword id="KW-0572">Peptidoglycan-anchor</keyword>
<keyword id="KW-0645">Protease</keyword>
<keyword id="KW-1185">Reference proteome</keyword>
<keyword id="KW-0677">Repeat</keyword>
<keyword id="KW-0964">Secreted</keyword>
<keyword id="KW-0732">Signal</keyword>
<keyword id="KW-0812">Transmembrane</keyword>
<keyword id="KW-1133">Transmembrane helix</keyword>
<keyword id="KW-0843">Virulence</keyword>
<keyword id="KW-0862">Zinc</keyword>
<protein>
    <recommendedName>
        <fullName>Immunoglobulin A1 protease</fullName>
        <shortName>IgA1 protease</shortName>
        <ecNumber>3.4.24.13</ecNumber>
    </recommendedName>
    <alternativeName>
        <fullName>IgA-specific zinc metalloproteinase</fullName>
    </alternativeName>
</protein>
<organism>
    <name type="scientific">Streptococcus pneumoniae serotype 4 (strain ATCC BAA-334 / TIGR4)</name>
    <dbReference type="NCBI Taxonomy" id="170187"/>
    <lineage>
        <taxon>Bacteria</taxon>
        <taxon>Bacillati</taxon>
        <taxon>Bacillota</taxon>
        <taxon>Bacilli</taxon>
        <taxon>Lactobacillales</taxon>
        <taxon>Streptococcaceae</taxon>
        <taxon>Streptococcus</taxon>
    </lineage>
</organism>
<reference key="1">
    <citation type="journal article" date="2001" name="Science">
        <title>Complete genome sequence of a virulent isolate of Streptococcus pneumoniae.</title>
        <authorList>
            <person name="Tettelin H."/>
            <person name="Nelson K.E."/>
            <person name="Paulsen I.T."/>
            <person name="Eisen J.A."/>
            <person name="Read T.D."/>
            <person name="Peterson S.N."/>
            <person name="Heidelberg J.F."/>
            <person name="DeBoy R.T."/>
            <person name="Haft D.H."/>
            <person name="Dodson R.J."/>
            <person name="Durkin A.S."/>
            <person name="Gwinn M.L."/>
            <person name="Kolonay J.F."/>
            <person name="Nelson W.C."/>
            <person name="Peterson J.D."/>
            <person name="Umayam L.A."/>
            <person name="White O."/>
            <person name="Salzberg S.L."/>
            <person name="Lewis M.R."/>
            <person name="Radune D."/>
            <person name="Holtzapple E.K."/>
            <person name="Khouri H.M."/>
            <person name="Wolf A.M."/>
            <person name="Utterback T.R."/>
            <person name="Hansen C.L."/>
            <person name="McDonald L.A."/>
            <person name="Feldblyum T.V."/>
            <person name="Angiuoli S.V."/>
            <person name="Dickinson T."/>
            <person name="Hickey E.K."/>
            <person name="Holt I.E."/>
            <person name="Loftus B.J."/>
            <person name="Yang F."/>
            <person name="Smith H.O."/>
            <person name="Venter J.C."/>
            <person name="Dougherty B.A."/>
            <person name="Morrison D.A."/>
            <person name="Hollingshead S.K."/>
            <person name="Fraser C.M."/>
        </authorList>
    </citation>
    <scope>NUCLEOTIDE SEQUENCE [LARGE SCALE GENOMIC DNA]</scope>
    <source>
        <strain>ATCC BAA-334 / TIGR4</strain>
    </source>
</reference>
<reference key="2">
    <citation type="journal article" date="2003" name="BMC Microbiol.">
        <title>The three extra-cellular zinc metalloproteinases of Streptococcus pneumoniae have a different impact on virulence in mice.</title>
        <authorList>
            <person name="Chiavolini D."/>
            <person name="Memmi G."/>
            <person name="Maggi T."/>
            <person name="Iannelli F."/>
            <person name="Pozzi G."/>
            <person name="Oggioni M.R."/>
        </authorList>
    </citation>
    <scope>ROLE IN VIRULENCE</scope>
</reference>
<gene>
    <name type="primary">iga</name>
    <name type="ordered locus">SP_1154</name>
</gene>